<organism>
    <name type="scientific">Caldanaerobacter subterraneus subsp. tengcongensis (strain DSM 15242 / JCM 11007 / NBRC 100824 / MB4)</name>
    <name type="common">Thermoanaerobacter tengcongensis</name>
    <dbReference type="NCBI Taxonomy" id="273068"/>
    <lineage>
        <taxon>Bacteria</taxon>
        <taxon>Bacillati</taxon>
        <taxon>Bacillota</taxon>
        <taxon>Clostridia</taxon>
        <taxon>Thermoanaerobacterales</taxon>
        <taxon>Thermoanaerobacteraceae</taxon>
        <taxon>Caldanaerobacter</taxon>
    </lineage>
</organism>
<sequence length="462" mass="54086">MRILYLQNALNFTEEVVEIFGDLLNKGMNITELVARIKELTDKLGREAIEAIIEELDRIIKEDKRRKEKWVVERKDKKRLTTVLGDIEYERTYYKSKEDGRYTYLVDDALEIGRHDRIEKGVKIKLVENAIEESYERSSKKACPEELSKQTVLNAIREIGEVEVKREIKEKKEVRGLYIEADEDHVPLQDGRDETPRLVYIHEGREEKNGRNVLKNVYYKAYVGEKPEDIWIDVANYIEDNYKEEKIEKIYIAGDGAPWIKEGLEWIVKSRFVLDRYHLNKYVLKATSKEPKYRDKIWRAINEGDKEGVKKVFDELIKAAEEEREKEKIKEAKKYILNNWEGIKIYSEDEDVIGCSAEGHISHVFSARLSRNPLGWSREGLKLMAKLRVFSKNGGDLREVEWGKKKNINAGSYKLTKKQIKEAVRRVKTSTNEKINNITVLNIGKVTPIYRVLRALKYAQVI</sequence>
<comment type="similarity">
    <text evidence="1">Belongs to the UPF0236 family.</text>
</comment>
<keyword id="KW-1185">Reference proteome</keyword>
<name>Y2489_CALS4</name>
<protein>
    <recommendedName>
        <fullName>UPF0236 protein TTE2489</fullName>
    </recommendedName>
</protein>
<proteinExistence type="inferred from homology"/>
<reference key="1">
    <citation type="journal article" date="2002" name="Genome Res.">
        <title>A complete sequence of the T. tengcongensis genome.</title>
        <authorList>
            <person name="Bao Q."/>
            <person name="Tian Y."/>
            <person name="Li W."/>
            <person name="Xu Z."/>
            <person name="Xuan Z."/>
            <person name="Hu S."/>
            <person name="Dong W."/>
            <person name="Yang J."/>
            <person name="Chen Y."/>
            <person name="Xue Y."/>
            <person name="Xu Y."/>
            <person name="Lai X."/>
            <person name="Huang L."/>
            <person name="Dong X."/>
            <person name="Ma Y."/>
            <person name="Ling L."/>
            <person name="Tan H."/>
            <person name="Chen R."/>
            <person name="Wang J."/>
            <person name="Yu J."/>
            <person name="Yang H."/>
        </authorList>
    </citation>
    <scope>NUCLEOTIDE SEQUENCE [LARGE SCALE GENOMIC DNA]</scope>
    <source>
        <strain>DSM 15242 / JCM 11007 / NBRC 100824 / MB4</strain>
    </source>
</reference>
<evidence type="ECO:0000305" key="1"/>
<dbReference type="EMBL" id="AE008691">
    <property type="protein sequence ID" value="AAM25619.1"/>
    <property type="molecule type" value="Genomic_DNA"/>
</dbReference>
<dbReference type="SMR" id="Q8R7C6"/>
<dbReference type="STRING" id="273068.TTE2489"/>
<dbReference type="KEGG" id="tte:TTE2489"/>
<dbReference type="eggNOG" id="COG3464">
    <property type="taxonomic scope" value="Bacteria"/>
</dbReference>
<dbReference type="HOGENOM" id="CLU_040782_0_1_9"/>
<dbReference type="OrthoDB" id="1719576at2"/>
<dbReference type="Proteomes" id="UP000000555">
    <property type="component" value="Chromosome"/>
</dbReference>
<dbReference type="InterPro" id="IPR009620">
    <property type="entry name" value="UPF0236"/>
</dbReference>
<dbReference type="NCBIfam" id="NF033529">
    <property type="entry name" value="transpos_ISLre2"/>
    <property type="match status" value="1"/>
</dbReference>
<dbReference type="Pfam" id="PF06782">
    <property type="entry name" value="UPF0236"/>
    <property type="match status" value="1"/>
</dbReference>
<gene>
    <name type="ordered locus">TTE2489</name>
</gene>
<accession>Q8R7C6</accession>
<feature type="chain" id="PRO_0000220413" description="UPF0236 protein TTE2489">
    <location>
        <begin position="1"/>
        <end position="462"/>
    </location>
</feature>